<protein>
    <recommendedName>
        <fullName evidence="1">Urease subunit alpha</fullName>
        <ecNumber evidence="1">3.5.1.5</ecNumber>
    </recommendedName>
    <alternativeName>
        <fullName evidence="1">Urea amidohydrolase subunit alpha</fullName>
    </alternativeName>
</protein>
<sequence length="566" mass="60701">MKISRQAYADMFGPTVGDKVRLADTELWIEVEKDFTTYGEEVKFGGGKVIRDGMGQGQLLAADVVDTLITNALIIDHWGIVKADVGIKNGRIAAIGKAGNPDIQPDVTIAVGAATEVIAGEGMILTAGGVDTHIHFICPQQIEEALMSGVTTMIGGGTGPATGTNATTVTPGPWHMARMLQASDSFPMNIGFTGKGNVSLPGPLIEQVKAGAIGLKLHEDWGTTPAAIDNCLSVADEYDVQVAIHTDTLNESGFVETTLAAFKNRTIHTYHTEGAGGGHAPDIIKACGSPNVLPSSTNPTRPFTRNTIDEHLDMLMVCHHLDPSIAEDVAFAESRIRRETIAAEDILHDLGAFSMLSSDSQAMGRVGEVIMRTWQTADKMKKQRGPLPQDGPGNDNFRAKRYIAKYTINPAITHGISHEVGSIEVGKWADLVLWRPAFFGVKPTLILKGGAIAASLMGDANASIPTPQPVHYRPMFASFGSSLHATSLTFISQAAFDAGVPETLGLKKQIGVVKGCRTVQKKDLIHNDYLPDIEVDPQTYQVKADGVLLWCEPADVLPMAQRYFLF</sequence>
<comment type="catalytic activity">
    <reaction evidence="1">
        <text>urea + 2 H2O + H(+) = hydrogencarbonate + 2 NH4(+)</text>
        <dbReference type="Rhea" id="RHEA:20557"/>
        <dbReference type="ChEBI" id="CHEBI:15377"/>
        <dbReference type="ChEBI" id="CHEBI:15378"/>
        <dbReference type="ChEBI" id="CHEBI:16199"/>
        <dbReference type="ChEBI" id="CHEBI:17544"/>
        <dbReference type="ChEBI" id="CHEBI:28938"/>
        <dbReference type="EC" id="3.5.1.5"/>
    </reaction>
</comment>
<comment type="cofactor">
    <cofactor evidence="1">
        <name>Ni cation</name>
        <dbReference type="ChEBI" id="CHEBI:25516"/>
    </cofactor>
    <text evidence="1">Binds 2 nickel ions per subunit.</text>
</comment>
<comment type="pathway">
    <text evidence="1">Nitrogen metabolism; urea degradation; CO(2) and NH(3) from urea (urease route): step 1/1.</text>
</comment>
<comment type="subunit">
    <text evidence="1">May form a heterohexamer of 3 UreC (alpha) and 3 UreAB (gamma/beta) subunits. May also form a heterotrimer of UreA (gamma), UreB (beta) and UreC (alpha) subunits. Three heterotrimers associate to form the active enzyme.</text>
</comment>
<comment type="subcellular location">
    <subcellularLocation>
        <location evidence="1">Cytoplasm</location>
    </subcellularLocation>
</comment>
<comment type="PTM">
    <text evidence="1">Carboxylation allows a single lysine to coordinate two nickel ions.</text>
</comment>
<comment type="similarity">
    <text evidence="1">Belongs to the metallo-dependent hydrolases superfamily. Urease alpha subunit family.</text>
</comment>
<keyword id="KW-0963">Cytoplasm</keyword>
<keyword id="KW-0378">Hydrolase</keyword>
<keyword id="KW-0479">Metal-binding</keyword>
<keyword id="KW-0533">Nickel</keyword>
<keyword id="KW-1185">Reference proteome</keyword>
<gene>
    <name evidence="1" type="primary">ureC</name>
    <name type="ordered locus">PSPTO_4895</name>
</gene>
<feature type="chain" id="PRO_0000234174" description="Urease subunit alpha">
    <location>
        <begin position="1"/>
        <end position="566"/>
    </location>
</feature>
<feature type="domain" description="Urease" evidence="1">
    <location>
        <begin position="128"/>
        <end position="566"/>
    </location>
</feature>
<feature type="active site" description="Proton donor" evidence="1">
    <location>
        <position position="319"/>
    </location>
</feature>
<feature type="binding site" evidence="1">
    <location>
        <position position="133"/>
    </location>
    <ligand>
        <name>Ni(2+)</name>
        <dbReference type="ChEBI" id="CHEBI:49786"/>
        <label>1</label>
    </ligand>
</feature>
<feature type="binding site" evidence="1">
    <location>
        <position position="135"/>
    </location>
    <ligand>
        <name>Ni(2+)</name>
        <dbReference type="ChEBI" id="CHEBI:49786"/>
        <label>1</label>
    </ligand>
</feature>
<feature type="binding site" description="via carbamate group" evidence="1">
    <location>
        <position position="216"/>
    </location>
    <ligand>
        <name>Ni(2+)</name>
        <dbReference type="ChEBI" id="CHEBI:49786"/>
        <label>1</label>
    </ligand>
</feature>
<feature type="binding site" description="via carbamate group" evidence="1">
    <location>
        <position position="216"/>
    </location>
    <ligand>
        <name>Ni(2+)</name>
        <dbReference type="ChEBI" id="CHEBI:49786"/>
        <label>2</label>
    </ligand>
</feature>
<feature type="binding site" evidence="1">
    <location>
        <position position="218"/>
    </location>
    <ligand>
        <name>substrate</name>
    </ligand>
</feature>
<feature type="binding site" evidence="1">
    <location>
        <position position="245"/>
    </location>
    <ligand>
        <name>Ni(2+)</name>
        <dbReference type="ChEBI" id="CHEBI:49786"/>
        <label>2</label>
    </ligand>
</feature>
<feature type="binding site" evidence="1">
    <location>
        <position position="271"/>
    </location>
    <ligand>
        <name>Ni(2+)</name>
        <dbReference type="ChEBI" id="CHEBI:49786"/>
        <label>2</label>
    </ligand>
</feature>
<feature type="binding site" evidence="1">
    <location>
        <position position="359"/>
    </location>
    <ligand>
        <name>Ni(2+)</name>
        <dbReference type="ChEBI" id="CHEBI:49786"/>
        <label>1</label>
    </ligand>
</feature>
<feature type="modified residue" description="N6-carboxylysine" evidence="1">
    <location>
        <position position="216"/>
    </location>
</feature>
<name>URE1_PSESM</name>
<organism>
    <name type="scientific">Pseudomonas syringae pv. tomato (strain ATCC BAA-871 / DC3000)</name>
    <dbReference type="NCBI Taxonomy" id="223283"/>
    <lineage>
        <taxon>Bacteria</taxon>
        <taxon>Pseudomonadati</taxon>
        <taxon>Pseudomonadota</taxon>
        <taxon>Gammaproteobacteria</taxon>
        <taxon>Pseudomonadales</taxon>
        <taxon>Pseudomonadaceae</taxon>
        <taxon>Pseudomonas</taxon>
    </lineage>
</organism>
<dbReference type="EC" id="3.5.1.5" evidence="1"/>
<dbReference type="EMBL" id="AE016853">
    <property type="protein sequence ID" value="AAO58324.1"/>
    <property type="molecule type" value="Genomic_DNA"/>
</dbReference>
<dbReference type="RefSeq" id="NP_794629.1">
    <property type="nucleotide sequence ID" value="NC_004578.1"/>
</dbReference>
<dbReference type="RefSeq" id="WP_005763096.1">
    <property type="nucleotide sequence ID" value="NC_004578.1"/>
</dbReference>
<dbReference type="SMR" id="Q87VP0"/>
<dbReference type="STRING" id="223283.PSPTO_4895"/>
<dbReference type="MEROPS" id="M38.982"/>
<dbReference type="GeneID" id="1186578"/>
<dbReference type="KEGG" id="pst:PSPTO_4895"/>
<dbReference type="PATRIC" id="fig|223283.9.peg.5008"/>
<dbReference type="eggNOG" id="COG0804">
    <property type="taxonomic scope" value="Bacteria"/>
</dbReference>
<dbReference type="HOGENOM" id="CLU_000980_0_0_6"/>
<dbReference type="OrthoDB" id="9802793at2"/>
<dbReference type="PhylomeDB" id="Q87VP0"/>
<dbReference type="UniPathway" id="UPA00258">
    <property type="reaction ID" value="UER00370"/>
</dbReference>
<dbReference type="Proteomes" id="UP000002515">
    <property type="component" value="Chromosome"/>
</dbReference>
<dbReference type="GO" id="GO:0005737">
    <property type="term" value="C:cytoplasm"/>
    <property type="evidence" value="ECO:0007669"/>
    <property type="project" value="UniProtKB-SubCell"/>
</dbReference>
<dbReference type="GO" id="GO:0016151">
    <property type="term" value="F:nickel cation binding"/>
    <property type="evidence" value="ECO:0007669"/>
    <property type="project" value="UniProtKB-UniRule"/>
</dbReference>
<dbReference type="GO" id="GO:0009039">
    <property type="term" value="F:urease activity"/>
    <property type="evidence" value="ECO:0007669"/>
    <property type="project" value="UniProtKB-UniRule"/>
</dbReference>
<dbReference type="GO" id="GO:0043419">
    <property type="term" value="P:urea catabolic process"/>
    <property type="evidence" value="ECO:0007669"/>
    <property type="project" value="UniProtKB-UniRule"/>
</dbReference>
<dbReference type="CDD" id="cd00375">
    <property type="entry name" value="Urease_alpha"/>
    <property type="match status" value="1"/>
</dbReference>
<dbReference type="Gene3D" id="3.20.20.140">
    <property type="entry name" value="Metal-dependent hydrolases"/>
    <property type="match status" value="1"/>
</dbReference>
<dbReference type="Gene3D" id="2.30.40.10">
    <property type="entry name" value="Urease, subunit C, domain 1"/>
    <property type="match status" value="1"/>
</dbReference>
<dbReference type="HAMAP" id="MF_01953">
    <property type="entry name" value="Urease_alpha"/>
    <property type="match status" value="1"/>
</dbReference>
<dbReference type="InterPro" id="IPR006680">
    <property type="entry name" value="Amidohydro-rel"/>
</dbReference>
<dbReference type="InterPro" id="IPR011059">
    <property type="entry name" value="Metal-dep_hydrolase_composite"/>
</dbReference>
<dbReference type="InterPro" id="IPR032466">
    <property type="entry name" value="Metal_Hydrolase"/>
</dbReference>
<dbReference type="InterPro" id="IPR011612">
    <property type="entry name" value="Urease_alpha_N_dom"/>
</dbReference>
<dbReference type="InterPro" id="IPR050112">
    <property type="entry name" value="Urease_alpha_subunit"/>
</dbReference>
<dbReference type="InterPro" id="IPR017950">
    <property type="entry name" value="Urease_AS"/>
</dbReference>
<dbReference type="InterPro" id="IPR005848">
    <property type="entry name" value="Urease_asu"/>
</dbReference>
<dbReference type="InterPro" id="IPR017951">
    <property type="entry name" value="Urease_asu_c"/>
</dbReference>
<dbReference type="InterPro" id="IPR029754">
    <property type="entry name" value="Urease_Ni-bd"/>
</dbReference>
<dbReference type="NCBIfam" id="NF009685">
    <property type="entry name" value="PRK13206.1"/>
    <property type="match status" value="1"/>
</dbReference>
<dbReference type="NCBIfam" id="NF009686">
    <property type="entry name" value="PRK13207.1"/>
    <property type="match status" value="1"/>
</dbReference>
<dbReference type="NCBIfam" id="TIGR01792">
    <property type="entry name" value="urease_alph"/>
    <property type="match status" value="1"/>
</dbReference>
<dbReference type="PANTHER" id="PTHR43440">
    <property type="entry name" value="UREASE"/>
    <property type="match status" value="1"/>
</dbReference>
<dbReference type="PANTHER" id="PTHR43440:SF1">
    <property type="entry name" value="UREASE"/>
    <property type="match status" value="1"/>
</dbReference>
<dbReference type="Pfam" id="PF01979">
    <property type="entry name" value="Amidohydro_1"/>
    <property type="match status" value="1"/>
</dbReference>
<dbReference type="Pfam" id="PF00449">
    <property type="entry name" value="Urease_alpha"/>
    <property type="match status" value="1"/>
</dbReference>
<dbReference type="PRINTS" id="PR01752">
    <property type="entry name" value="UREASE"/>
</dbReference>
<dbReference type="SUPFAM" id="SSF51338">
    <property type="entry name" value="Composite domain of metallo-dependent hydrolases"/>
    <property type="match status" value="1"/>
</dbReference>
<dbReference type="SUPFAM" id="SSF51556">
    <property type="entry name" value="Metallo-dependent hydrolases"/>
    <property type="match status" value="1"/>
</dbReference>
<dbReference type="PROSITE" id="PS01120">
    <property type="entry name" value="UREASE_1"/>
    <property type="match status" value="1"/>
</dbReference>
<dbReference type="PROSITE" id="PS00145">
    <property type="entry name" value="UREASE_2"/>
    <property type="match status" value="1"/>
</dbReference>
<dbReference type="PROSITE" id="PS51368">
    <property type="entry name" value="UREASE_3"/>
    <property type="match status" value="1"/>
</dbReference>
<proteinExistence type="inferred from homology"/>
<reference key="1">
    <citation type="journal article" date="2003" name="Proc. Natl. Acad. Sci. U.S.A.">
        <title>The complete genome sequence of the Arabidopsis and tomato pathogen Pseudomonas syringae pv. tomato DC3000.</title>
        <authorList>
            <person name="Buell C.R."/>
            <person name="Joardar V."/>
            <person name="Lindeberg M."/>
            <person name="Selengut J."/>
            <person name="Paulsen I.T."/>
            <person name="Gwinn M.L."/>
            <person name="Dodson R.J."/>
            <person name="DeBoy R.T."/>
            <person name="Durkin A.S."/>
            <person name="Kolonay J.F."/>
            <person name="Madupu R."/>
            <person name="Daugherty S.C."/>
            <person name="Brinkac L.M."/>
            <person name="Beanan M.J."/>
            <person name="Haft D.H."/>
            <person name="Nelson W.C."/>
            <person name="Davidsen T.M."/>
            <person name="Zafar N."/>
            <person name="Zhou L."/>
            <person name="Liu J."/>
            <person name="Yuan Q."/>
            <person name="Khouri H.M."/>
            <person name="Fedorova N.B."/>
            <person name="Tran B."/>
            <person name="Russell D."/>
            <person name="Berry K.J."/>
            <person name="Utterback T.R."/>
            <person name="Van Aken S.E."/>
            <person name="Feldblyum T.V."/>
            <person name="D'Ascenzo M."/>
            <person name="Deng W.-L."/>
            <person name="Ramos A.R."/>
            <person name="Alfano J.R."/>
            <person name="Cartinhour S."/>
            <person name="Chatterjee A.K."/>
            <person name="Delaney T.P."/>
            <person name="Lazarowitz S.G."/>
            <person name="Martin G.B."/>
            <person name="Schneider D.J."/>
            <person name="Tang X."/>
            <person name="Bender C.L."/>
            <person name="White O."/>
            <person name="Fraser C.M."/>
            <person name="Collmer A."/>
        </authorList>
    </citation>
    <scope>NUCLEOTIDE SEQUENCE [LARGE SCALE GENOMIC DNA]</scope>
    <source>
        <strain>ATCC BAA-871 / DC3000</strain>
    </source>
</reference>
<accession>Q87VP0</accession>
<evidence type="ECO:0000255" key="1">
    <source>
        <dbReference type="HAMAP-Rule" id="MF_01953"/>
    </source>
</evidence>